<organism>
    <name type="scientific">Vanderwaltozyma polyspora (strain ATCC 22028 / DSM 70294 / BCRC 21397 / CBS 2163 / NBRC 10782 / NRRL Y-8283 / UCD 57-17)</name>
    <name type="common">Kluyveromyces polysporus</name>
    <dbReference type="NCBI Taxonomy" id="436907"/>
    <lineage>
        <taxon>Eukaryota</taxon>
        <taxon>Fungi</taxon>
        <taxon>Dikarya</taxon>
        <taxon>Ascomycota</taxon>
        <taxon>Saccharomycotina</taxon>
        <taxon>Saccharomycetes</taxon>
        <taxon>Saccharomycetales</taxon>
        <taxon>Saccharomycetaceae</taxon>
        <taxon>Vanderwaltozyma</taxon>
    </lineage>
</organism>
<dbReference type="EMBL" id="DS480391">
    <property type="protein sequence ID" value="EDO18288.1"/>
    <property type="molecule type" value="Genomic_DNA"/>
</dbReference>
<dbReference type="RefSeq" id="XP_001646146.1">
    <property type="nucleotide sequence ID" value="XM_001646096.1"/>
</dbReference>
<dbReference type="SMR" id="A7THG4"/>
<dbReference type="FunCoup" id="A7THG4">
    <property type="interactions" value="288"/>
</dbReference>
<dbReference type="STRING" id="436907.A7THG4"/>
<dbReference type="GeneID" id="5546568"/>
<dbReference type="KEGG" id="vpo:Kpol_1039p38"/>
<dbReference type="eggNOG" id="KOG3758">
    <property type="taxonomic scope" value="Eukaryota"/>
</dbReference>
<dbReference type="HOGENOM" id="CLU_017837_0_0_1"/>
<dbReference type="InParanoid" id="A7THG4"/>
<dbReference type="OMA" id="IINMICP"/>
<dbReference type="OrthoDB" id="272987at2759"/>
<dbReference type="PhylomeDB" id="A7THG4"/>
<dbReference type="Proteomes" id="UP000000267">
    <property type="component" value="Unassembled WGS sequence"/>
</dbReference>
<dbReference type="GO" id="GO:0000139">
    <property type="term" value="C:Golgi membrane"/>
    <property type="evidence" value="ECO:0007669"/>
    <property type="project" value="UniProtKB-SubCell"/>
</dbReference>
<dbReference type="GO" id="GO:0017119">
    <property type="term" value="C:Golgi transport complex"/>
    <property type="evidence" value="ECO:0007669"/>
    <property type="project" value="EnsemblFungi"/>
</dbReference>
<dbReference type="GO" id="GO:0032258">
    <property type="term" value="P:cytoplasm to vacuole targeting by the Cvt pathway"/>
    <property type="evidence" value="ECO:0007669"/>
    <property type="project" value="EnsemblFungi"/>
</dbReference>
<dbReference type="GO" id="GO:0006891">
    <property type="term" value="P:intra-Golgi vesicle-mediated transport"/>
    <property type="evidence" value="ECO:0007669"/>
    <property type="project" value="EnsemblFungi"/>
</dbReference>
<dbReference type="InterPro" id="IPR010490">
    <property type="entry name" value="COG6"/>
</dbReference>
<dbReference type="InterPro" id="IPR048369">
    <property type="entry name" value="COG6_C"/>
</dbReference>
<dbReference type="InterPro" id="IPR048368">
    <property type="entry name" value="COG6_N"/>
</dbReference>
<dbReference type="PANTHER" id="PTHR21506">
    <property type="entry name" value="COMPONENT OF OLIGOMERIC GOLGI COMPLEX 6"/>
    <property type="match status" value="1"/>
</dbReference>
<dbReference type="PANTHER" id="PTHR21506:SF0">
    <property type="entry name" value="CONSERVED OLIGOMERIC GOLGI COMPLEX SUBUNIT 6"/>
    <property type="match status" value="1"/>
</dbReference>
<dbReference type="Pfam" id="PF20653">
    <property type="entry name" value="COG6_C"/>
    <property type="match status" value="1"/>
</dbReference>
<dbReference type="Pfam" id="PF06419">
    <property type="entry name" value="COG6_N"/>
    <property type="match status" value="1"/>
</dbReference>
<dbReference type="SMART" id="SM01087">
    <property type="entry name" value="COG6"/>
    <property type="match status" value="1"/>
</dbReference>
<accession>A7THG4</accession>
<keyword id="KW-0333">Golgi apparatus</keyword>
<keyword id="KW-0472">Membrane</keyword>
<keyword id="KW-0653">Protein transport</keyword>
<keyword id="KW-1185">Reference proteome</keyword>
<keyword id="KW-0813">Transport</keyword>
<proteinExistence type="inferred from homology"/>
<reference key="1">
    <citation type="journal article" date="2007" name="Proc. Natl. Acad. Sci. U.S.A.">
        <title>Independent sorting-out of thousands of duplicated gene pairs in two yeast species descended from a whole-genome duplication.</title>
        <authorList>
            <person name="Scannell D.R."/>
            <person name="Frank A.C."/>
            <person name="Conant G.C."/>
            <person name="Byrne K.P."/>
            <person name="Woolfit M."/>
            <person name="Wolfe K.H."/>
        </authorList>
    </citation>
    <scope>NUCLEOTIDE SEQUENCE [LARGE SCALE GENOMIC DNA]</scope>
    <source>
        <strain>ATCC 22028 / DSM 70294 / BCRC 21397 / CBS 2163 / NBRC 10782 / NRRL Y-8283 / UCD 57-17</strain>
    </source>
</reference>
<comment type="function">
    <text evidence="1">Acts as a component of the peripheral membrane COG complex that is involved in intra-Golgi protein trafficking. COG is located at the cis-Golgi, and regulates tethering of retrograde intra-Golgi vesicles and possibly a number of other membrane trafficking events (By similarity).</text>
</comment>
<comment type="subcellular location">
    <subcellularLocation>
        <location evidence="1">Golgi apparatus membrane</location>
        <topology evidence="1">Peripheral membrane protein</topology>
    </subcellularLocation>
</comment>
<comment type="similarity">
    <text evidence="2">Belongs to the COG6 family.</text>
</comment>
<evidence type="ECO:0000250" key="1"/>
<evidence type="ECO:0000305" key="2"/>
<sequence length="825" mass="94458">MEFIDYDTFGVSDTISTSAGDGALPEPVAILNLNALSFEKPDEHNEINLSELLVDRGTTDGGKNVNLNAKMSNYAKLSMESLHISGTSDNLSVNTLPSYIPDGNKESLDISKLVFQQKNQSLEATNMILNKKLSKILNDYSFSNYQSTSYLRKSLNSLEENKVALSLDENKLTNPGYIGTLARKTLKSDVETELLKEHLTVLEEFRPIVRKIKKLSSSIENIQNLGTSMLKESKENATGTEEPMFDRIKSLRKDIDNLKLKKELLLSIRDQYTLTQVEDDKISNGSVDEELFEIINKVMRIKEKTVFMLGLENPNAGKSLMHEVNNILQRLNRKLFNHLLDILYIFESGTNNVNEKFLSPNEKGVQTFQRSLIYLSNDLEYFNEFLKRVTSLRSKTVLDQFLSQFDFNSKDANPIMLSAYDPLRYIGDILANVYSLIANEADFVRSLFNFQEMQMENTPVSIIQKKDEFLDGLDSKLLNEIIQSLSNTCRIRIGQIIKFEDNPITNFEIVKLLELYKMMFERKGIKSNSSLINNLSALGVVSQEKLIECYSNFVNEIEKTTYVATEDFLPPEWLSDYLVKITDLFEAYEQHGGRESDTNEIIITDTFLEKVIKEPIENTLLKQLKEGFPLAKKEEQARTSLYTVQINCFDLIKSRIQPFASVIFSKDGEKNDVLKWISDKSEEVINQMLELQKKILFDKTGLGMYNNLLNMIFPISSVKDDLDLDMYYSLSENSLMNLDSINTNVHEKLNDYVPIALTDMQGNLLFKLTSPVIADKICDSCFSTLSEFYITFRKTLMHIYPEEEIKIKEILNFSEEEFKTLVGIE</sequence>
<name>COG6_VANPO</name>
<gene>
    <name type="primary">COG6</name>
    <name type="ORF">Kpol_1039p38</name>
</gene>
<feature type="chain" id="PRO_0000339332" description="Conserved oligomeric Golgi complex subunit 6">
    <location>
        <begin position="1"/>
        <end position="825"/>
    </location>
</feature>
<protein>
    <recommendedName>
        <fullName>Conserved oligomeric Golgi complex subunit 6</fullName>
        <shortName>COG complex subunit 6</shortName>
    </recommendedName>
    <alternativeName>
        <fullName>Component of oligomeric Golgi complex 6</fullName>
    </alternativeName>
</protein>